<reference key="1">
    <citation type="journal article" date="2010" name="Genome Biol. Evol.">
        <title>Continuing evolution of Burkholderia mallei through genome reduction and large-scale rearrangements.</title>
        <authorList>
            <person name="Losada L."/>
            <person name="Ronning C.M."/>
            <person name="DeShazer D."/>
            <person name="Woods D."/>
            <person name="Fedorova N."/>
            <person name="Kim H.S."/>
            <person name="Shabalina S.A."/>
            <person name="Pearson T.R."/>
            <person name="Brinkac L."/>
            <person name="Tan P."/>
            <person name="Nandi T."/>
            <person name="Crabtree J."/>
            <person name="Badger J."/>
            <person name="Beckstrom-Sternberg S."/>
            <person name="Saqib M."/>
            <person name="Schutzer S.E."/>
            <person name="Keim P."/>
            <person name="Nierman W.C."/>
        </authorList>
    </citation>
    <scope>NUCLEOTIDE SEQUENCE [LARGE SCALE GENOMIC DNA]</scope>
    <source>
        <strain>1710b</strain>
    </source>
</reference>
<accession>Q3JRQ1</accession>
<sequence length="378" mass="41131">MAGETIVNLLDLDAEGLVAYCGSLGEKAFRAKQLQRWIHQYNAADFDGMTDLAKSLREKLKGRAVIGTPDILSDHVSADGTRKWLINVGNGNAVETVFIPEETRGTLCVSSQAGCAVNCRFCSTGKQGFSRNLSTGEIVGQLRMAEFALRASLGRAPGPNGKAERVITNVVMMGMGEPLLNYSAVVPAMRLMLDDNAYGLSRRRVTLSTSGVVPMMDRLGAELPVALAVSLHAPNDALRDELVPLNKKHPLRELMAACQRYLKVAPRDFITFEYCMLDGVNDTEAHARELLAVTRDVPCKFNLIPFNPFPESGLVRSKTEQIKRFAQVLIDAGVVTTIRKTRGDDIDAACGQLAGAVKDRTRLAERTGASKIIEVRAV</sequence>
<keyword id="KW-0004">4Fe-4S</keyword>
<keyword id="KW-0963">Cytoplasm</keyword>
<keyword id="KW-1015">Disulfide bond</keyword>
<keyword id="KW-0408">Iron</keyword>
<keyword id="KW-0411">Iron-sulfur</keyword>
<keyword id="KW-0479">Metal-binding</keyword>
<keyword id="KW-0489">Methyltransferase</keyword>
<keyword id="KW-0698">rRNA processing</keyword>
<keyword id="KW-0949">S-adenosyl-L-methionine</keyword>
<keyword id="KW-0808">Transferase</keyword>
<keyword id="KW-0819">tRNA processing</keyword>
<protein>
    <recommendedName>
        <fullName evidence="1">Dual-specificity RNA methyltransferase RlmN</fullName>
        <ecNumber evidence="1">2.1.1.192</ecNumber>
    </recommendedName>
    <alternativeName>
        <fullName evidence="1">23S rRNA (adenine(2503)-C(2))-methyltransferase</fullName>
    </alternativeName>
    <alternativeName>
        <fullName evidence="1">23S rRNA m2A2503 methyltransferase</fullName>
    </alternativeName>
    <alternativeName>
        <fullName evidence="1">Ribosomal RNA large subunit methyltransferase N</fullName>
    </alternativeName>
    <alternativeName>
        <fullName evidence="1">tRNA (adenine(37)-C(2))-methyltransferase</fullName>
    </alternativeName>
    <alternativeName>
        <fullName evidence="1">tRNA m2A37 methyltransferase</fullName>
    </alternativeName>
</protein>
<gene>
    <name evidence="1" type="primary">rlmN</name>
    <name type="ordered locus">BURPS1710b_2357</name>
</gene>
<organism>
    <name type="scientific">Burkholderia pseudomallei (strain 1710b)</name>
    <dbReference type="NCBI Taxonomy" id="320372"/>
    <lineage>
        <taxon>Bacteria</taxon>
        <taxon>Pseudomonadati</taxon>
        <taxon>Pseudomonadota</taxon>
        <taxon>Betaproteobacteria</taxon>
        <taxon>Burkholderiales</taxon>
        <taxon>Burkholderiaceae</taxon>
        <taxon>Burkholderia</taxon>
        <taxon>pseudomallei group</taxon>
    </lineage>
</organism>
<dbReference type="EC" id="2.1.1.192" evidence="1"/>
<dbReference type="EMBL" id="CP000124">
    <property type="protein sequence ID" value="ABA50524.1"/>
    <property type="molecule type" value="Genomic_DNA"/>
</dbReference>
<dbReference type="RefSeq" id="WP_004192451.1">
    <property type="nucleotide sequence ID" value="NC_007434.1"/>
</dbReference>
<dbReference type="SMR" id="Q3JRQ1"/>
<dbReference type="EnsemblBacteria" id="ABA50524">
    <property type="protein sequence ID" value="ABA50524"/>
    <property type="gene ID" value="BURPS1710b_2357"/>
</dbReference>
<dbReference type="GeneID" id="93060478"/>
<dbReference type="KEGG" id="bpm:BURPS1710b_2357"/>
<dbReference type="HOGENOM" id="CLU_029101_0_0_4"/>
<dbReference type="Proteomes" id="UP000002700">
    <property type="component" value="Chromosome I"/>
</dbReference>
<dbReference type="GO" id="GO:0005737">
    <property type="term" value="C:cytoplasm"/>
    <property type="evidence" value="ECO:0007669"/>
    <property type="project" value="UniProtKB-SubCell"/>
</dbReference>
<dbReference type="GO" id="GO:0051539">
    <property type="term" value="F:4 iron, 4 sulfur cluster binding"/>
    <property type="evidence" value="ECO:0007669"/>
    <property type="project" value="UniProtKB-UniRule"/>
</dbReference>
<dbReference type="GO" id="GO:0046872">
    <property type="term" value="F:metal ion binding"/>
    <property type="evidence" value="ECO:0007669"/>
    <property type="project" value="UniProtKB-KW"/>
</dbReference>
<dbReference type="GO" id="GO:0070040">
    <property type="term" value="F:rRNA (adenine(2503)-C2-)-methyltransferase activity"/>
    <property type="evidence" value="ECO:0007669"/>
    <property type="project" value="UniProtKB-UniRule"/>
</dbReference>
<dbReference type="GO" id="GO:0019843">
    <property type="term" value="F:rRNA binding"/>
    <property type="evidence" value="ECO:0007669"/>
    <property type="project" value="UniProtKB-UniRule"/>
</dbReference>
<dbReference type="GO" id="GO:0002935">
    <property type="term" value="F:tRNA (adenine(37)-C2)-methyltransferase activity"/>
    <property type="evidence" value="ECO:0007669"/>
    <property type="project" value="UniProtKB-UniRule"/>
</dbReference>
<dbReference type="GO" id="GO:0000049">
    <property type="term" value="F:tRNA binding"/>
    <property type="evidence" value="ECO:0007669"/>
    <property type="project" value="UniProtKB-UniRule"/>
</dbReference>
<dbReference type="GO" id="GO:0070475">
    <property type="term" value="P:rRNA base methylation"/>
    <property type="evidence" value="ECO:0007669"/>
    <property type="project" value="UniProtKB-UniRule"/>
</dbReference>
<dbReference type="GO" id="GO:0030488">
    <property type="term" value="P:tRNA methylation"/>
    <property type="evidence" value="ECO:0007669"/>
    <property type="project" value="UniProtKB-UniRule"/>
</dbReference>
<dbReference type="CDD" id="cd01335">
    <property type="entry name" value="Radical_SAM"/>
    <property type="match status" value="1"/>
</dbReference>
<dbReference type="FunFam" id="1.10.150.530:FF:000003">
    <property type="entry name" value="Dual-specificity RNA methyltransferase RlmN"/>
    <property type="match status" value="1"/>
</dbReference>
<dbReference type="FunFam" id="3.20.20.70:FF:000008">
    <property type="entry name" value="Dual-specificity RNA methyltransferase RlmN"/>
    <property type="match status" value="1"/>
</dbReference>
<dbReference type="Gene3D" id="1.10.150.530">
    <property type="match status" value="1"/>
</dbReference>
<dbReference type="Gene3D" id="3.20.20.70">
    <property type="entry name" value="Aldolase class I"/>
    <property type="match status" value="1"/>
</dbReference>
<dbReference type="HAMAP" id="MF_01849">
    <property type="entry name" value="RNA_methyltr_RlmN"/>
    <property type="match status" value="1"/>
</dbReference>
<dbReference type="InterPro" id="IPR013785">
    <property type="entry name" value="Aldolase_TIM"/>
</dbReference>
<dbReference type="InterPro" id="IPR040072">
    <property type="entry name" value="Methyltransferase_A"/>
</dbReference>
<dbReference type="InterPro" id="IPR048641">
    <property type="entry name" value="RlmN_N"/>
</dbReference>
<dbReference type="InterPro" id="IPR027492">
    <property type="entry name" value="RNA_MTrfase_RlmN"/>
</dbReference>
<dbReference type="InterPro" id="IPR004383">
    <property type="entry name" value="rRNA_lsu_MTrfase_RlmN/Cfr"/>
</dbReference>
<dbReference type="InterPro" id="IPR007197">
    <property type="entry name" value="rSAM"/>
</dbReference>
<dbReference type="NCBIfam" id="TIGR00048">
    <property type="entry name" value="rRNA_mod_RlmN"/>
    <property type="match status" value="1"/>
</dbReference>
<dbReference type="PANTHER" id="PTHR30544">
    <property type="entry name" value="23S RRNA METHYLTRANSFERASE"/>
    <property type="match status" value="1"/>
</dbReference>
<dbReference type="PANTHER" id="PTHR30544:SF5">
    <property type="entry name" value="RADICAL SAM CORE DOMAIN-CONTAINING PROTEIN"/>
    <property type="match status" value="1"/>
</dbReference>
<dbReference type="Pfam" id="PF04055">
    <property type="entry name" value="Radical_SAM"/>
    <property type="match status" value="1"/>
</dbReference>
<dbReference type="Pfam" id="PF21016">
    <property type="entry name" value="RlmN_N"/>
    <property type="match status" value="1"/>
</dbReference>
<dbReference type="PIRSF" id="PIRSF006004">
    <property type="entry name" value="CHP00048"/>
    <property type="match status" value="1"/>
</dbReference>
<dbReference type="SFLD" id="SFLDF00275">
    <property type="entry name" value="adenosine_C2_methyltransferase"/>
    <property type="match status" value="1"/>
</dbReference>
<dbReference type="SFLD" id="SFLDG01062">
    <property type="entry name" value="methyltransferase_(Class_A)"/>
    <property type="match status" value="1"/>
</dbReference>
<dbReference type="SUPFAM" id="SSF102114">
    <property type="entry name" value="Radical SAM enzymes"/>
    <property type="match status" value="1"/>
</dbReference>
<dbReference type="PROSITE" id="PS51918">
    <property type="entry name" value="RADICAL_SAM"/>
    <property type="match status" value="1"/>
</dbReference>
<feature type="chain" id="PRO_0000350083" description="Dual-specificity RNA methyltransferase RlmN">
    <location>
        <begin position="1"/>
        <end position="378"/>
    </location>
</feature>
<feature type="domain" description="Radical SAM core" evidence="2">
    <location>
        <begin position="101"/>
        <end position="345"/>
    </location>
</feature>
<feature type="active site" description="Proton acceptor" evidence="1">
    <location>
        <position position="95"/>
    </location>
</feature>
<feature type="active site" description="S-methylcysteine intermediate" evidence="1">
    <location>
        <position position="350"/>
    </location>
</feature>
<feature type="binding site" evidence="1">
    <location>
        <position position="115"/>
    </location>
    <ligand>
        <name>[4Fe-4S] cluster</name>
        <dbReference type="ChEBI" id="CHEBI:49883"/>
        <note>4Fe-4S-S-AdoMet</note>
    </ligand>
</feature>
<feature type="binding site" evidence="1">
    <location>
        <position position="119"/>
    </location>
    <ligand>
        <name>[4Fe-4S] cluster</name>
        <dbReference type="ChEBI" id="CHEBI:49883"/>
        <note>4Fe-4S-S-AdoMet</note>
    </ligand>
</feature>
<feature type="binding site" evidence="1">
    <location>
        <position position="122"/>
    </location>
    <ligand>
        <name>[4Fe-4S] cluster</name>
        <dbReference type="ChEBI" id="CHEBI:49883"/>
        <note>4Fe-4S-S-AdoMet</note>
    </ligand>
</feature>
<feature type="binding site" evidence="1">
    <location>
        <begin position="176"/>
        <end position="177"/>
    </location>
    <ligand>
        <name>S-adenosyl-L-methionine</name>
        <dbReference type="ChEBI" id="CHEBI:59789"/>
    </ligand>
</feature>
<feature type="binding site" evidence="1">
    <location>
        <position position="208"/>
    </location>
    <ligand>
        <name>S-adenosyl-L-methionine</name>
        <dbReference type="ChEBI" id="CHEBI:59789"/>
    </ligand>
</feature>
<feature type="binding site" evidence="1">
    <location>
        <begin position="230"/>
        <end position="232"/>
    </location>
    <ligand>
        <name>S-adenosyl-L-methionine</name>
        <dbReference type="ChEBI" id="CHEBI:59789"/>
    </ligand>
</feature>
<feature type="binding site" evidence="1">
    <location>
        <position position="307"/>
    </location>
    <ligand>
        <name>S-adenosyl-L-methionine</name>
        <dbReference type="ChEBI" id="CHEBI:59789"/>
    </ligand>
</feature>
<feature type="disulfide bond" description="(transient)" evidence="1">
    <location>
        <begin position="108"/>
        <end position="350"/>
    </location>
</feature>
<evidence type="ECO:0000255" key="1">
    <source>
        <dbReference type="HAMAP-Rule" id="MF_01849"/>
    </source>
</evidence>
<evidence type="ECO:0000255" key="2">
    <source>
        <dbReference type="PROSITE-ProRule" id="PRU01266"/>
    </source>
</evidence>
<name>RLMN_BURP1</name>
<proteinExistence type="inferred from homology"/>
<comment type="function">
    <text evidence="1">Specifically methylates position 2 of adenine 2503 in 23S rRNA and position 2 of adenine 37 in tRNAs. m2A2503 modification seems to play a crucial role in the proofreading step occurring at the peptidyl transferase center and thus would serve to optimize ribosomal fidelity.</text>
</comment>
<comment type="catalytic activity">
    <reaction evidence="1">
        <text>adenosine(2503) in 23S rRNA + 2 reduced [2Fe-2S]-[ferredoxin] + 2 S-adenosyl-L-methionine = 2-methyladenosine(2503) in 23S rRNA + 5'-deoxyadenosine + L-methionine + 2 oxidized [2Fe-2S]-[ferredoxin] + S-adenosyl-L-homocysteine</text>
        <dbReference type="Rhea" id="RHEA:42916"/>
        <dbReference type="Rhea" id="RHEA-COMP:10000"/>
        <dbReference type="Rhea" id="RHEA-COMP:10001"/>
        <dbReference type="Rhea" id="RHEA-COMP:10152"/>
        <dbReference type="Rhea" id="RHEA-COMP:10282"/>
        <dbReference type="ChEBI" id="CHEBI:17319"/>
        <dbReference type="ChEBI" id="CHEBI:33737"/>
        <dbReference type="ChEBI" id="CHEBI:33738"/>
        <dbReference type="ChEBI" id="CHEBI:57844"/>
        <dbReference type="ChEBI" id="CHEBI:57856"/>
        <dbReference type="ChEBI" id="CHEBI:59789"/>
        <dbReference type="ChEBI" id="CHEBI:74411"/>
        <dbReference type="ChEBI" id="CHEBI:74497"/>
        <dbReference type="EC" id="2.1.1.192"/>
    </reaction>
</comment>
<comment type="catalytic activity">
    <reaction evidence="1">
        <text>adenosine(37) in tRNA + 2 reduced [2Fe-2S]-[ferredoxin] + 2 S-adenosyl-L-methionine = 2-methyladenosine(37) in tRNA + 5'-deoxyadenosine + L-methionine + 2 oxidized [2Fe-2S]-[ferredoxin] + S-adenosyl-L-homocysteine</text>
        <dbReference type="Rhea" id="RHEA:43332"/>
        <dbReference type="Rhea" id="RHEA-COMP:10000"/>
        <dbReference type="Rhea" id="RHEA-COMP:10001"/>
        <dbReference type="Rhea" id="RHEA-COMP:10162"/>
        <dbReference type="Rhea" id="RHEA-COMP:10485"/>
        <dbReference type="ChEBI" id="CHEBI:17319"/>
        <dbReference type="ChEBI" id="CHEBI:33737"/>
        <dbReference type="ChEBI" id="CHEBI:33738"/>
        <dbReference type="ChEBI" id="CHEBI:57844"/>
        <dbReference type="ChEBI" id="CHEBI:57856"/>
        <dbReference type="ChEBI" id="CHEBI:59789"/>
        <dbReference type="ChEBI" id="CHEBI:74411"/>
        <dbReference type="ChEBI" id="CHEBI:74497"/>
        <dbReference type="EC" id="2.1.1.192"/>
    </reaction>
</comment>
<comment type="cofactor">
    <cofactor evidence="1">
        <name>[4Fe-4S] cluster</name>
        <dbReference type="ChEBI" id="CHEBI:49883"/>
    </cofactor>
    <text evidence="1">Binds 1 [4Fe-4S] cluster. The cluster is coordinated with 3 cysteines and an exchangeable S-adenosyl-L-methionine.</text>
</comment>
<comment type="subcellular location">
    <subcellularLocation>
        <location evidence="1">Cytoplasm</location>
    </subcellularLocation>
</comment>
<comment type="miscellaneous">
    <text evidence="1">Reaction proceeds by a ping-pong mechanism involving intermediate methylation of a conserved cysteine residue.</text>
</comment>
<comment type="similarity">
    <text evidence="1">Belongs to the radical SAM superfamily. RlmN family.</text>
</comment>